<accession>Q39VA6</accession>
<comment type="function">
    <text evidence="2">One of the essential components for the initiation of protein synthesis. Protects formylmethionyl-tRNA from spontaneous hydrolysis and promotes its binding to the 30S ribosomal subunits. Also involved in the hydrolysis of GTP during the formation of the 70S ribosomal complex.</text>
</comment>
<comment type="subcellular location">
    <subcellularLocation>
        <location evidence="2">Cytoplasm</location>
    </subcellularLocation>
</comment>
<comment type="similarity">
    <text evidence="2">Belongs to the TRAFAC class translation factor GTPase superfamily. Classic translation factor GTPase family. IF-2 subfamily.</text>
</comment>
<evidence type="ECO:0000250" key="1"/>
<evidence type="ECO:0000255" key="2">
    <source>
        <dbReference type="HAMAP-Rule" id="MF_00100"/>
    </source>
</evidence>
<evidence type="ECO:0000256" key="3">
    <source>
        <dbReference type="SAM" id="MobiDB-lite"/>
    </source>
</evidence>
<sequence>MSKTHVYELAKKMGVENKELMARLKSLGIEVKSHLSVLEDEDVQKVTAPPTPPKGVQQQEEVRVTTTVIRRRPKAVAQPPEEVAPAAVESAVIEEAPAPRVEAVPEEPKASPAFAETVPAVEEPKGVEPKIGVPKVETPVASESKAEEPRVTAPPAQPKPVAAEEEKPTMNRARILGRVELPGLTTASKPVPKPAERREVVIPPKRKMEERAVTPQPAAPVADDRKKKAKTFTEPETPAGGAPGAKKGAPGGKKKEAFKKAELLEKRERIFEPGPKTGKGRRRERESVTFGKKTEITVPKAIKRIIKISESITVGELAKRMGVKATDLIRVLMKMGMMATINHPLDVDTATLIAAEFSYEIENVAIDTDEMLESAPDTPESLKKRPPVVTIMGHVDHGKTSLLDAIREANVIAGEAGGITQHIGAYDVELNGRKITFLDTPGHEAFTAMRARGAKVTDIVILVVAADDGVMPQTREAINHSKAAGVPIIIAINKIDKPEAKPERVKQELMEFGLVSEEWGGETIFVEVSAKKRINLPELLEMVLLQADVMDLKANPDKEARGTIVEAKLDRGRGPVATVLVQEGTLKVGDYFVAGVHSGRVRAMQNDRGDKVLAAGPSMPVEVIGFTGVPDAGDVFISLSDEKKAKEIASHRQQKLRETELAKHSKMSLEQLYDKIQKGEVKDLNAIVKADVQGSVEAVSDSLRKLSTDAVRLNVIHSSVGAITETDVNLASASNAIILGFNVRPEPKASAMAEKEGVDVRLYNIIYDAVEDIKKAMEGLLEPTLREKYLGRAEIREVFSVPKVGNVGGCYIQDGKVLRNASVRLLRDNVVVYEGKMSSLRRFKDDVKEVATGYECGIGLENYNDIKVGDIIEAFEIEKIATKL</sequence>
<keyword id="KW-0963">Cytoplasm</keyword>
<keyword id="KW-0342">GTP-binding</keyword>
<keyword id="KW-0396">Initiation factor</keyword>
<keyword id="KW-0547">Nucleotide-binding</keyword>
<keyword id="KW-0648">Protein biosynthesis</keyword>
<keyword id="KW-1185">Reference proteome</keyword>
<feature type="chain" id="PRO_0000228200" description="Translation initiation factor IF-2">
    <location>
        <begin position="1"/>
        <end position="884"/>
    </location>
</feature>
<feature type="domain" description="tr-type G">
    <location>
        <begin position="384"/>
        <end position="553"/>
    </location>
</feature>
<feature type="region of interest" description="Disordered" evidence="3">
    <location>
        <begin position="42"/>
        <end position="62"/>
    </location>
</feature>
<feature type="region of interest" description="Disordered" evidence="3">
    <location>
        <begin position="123"/>
        <end position="254"/>
    </location>
</feature>
<feature type="region of interest" description="G1" evidence="1">
    <location>
        <begin position="393"/>
        <end position="400"/>
    </location>
</feature>
<feature type="region of interest" description="G2" evidence="1">
    <location>
        <begin position="418"/>
        <end position="422"/>
    </location>
</feature>
<feature type="region of interest" description="G3" evidence="1">
    <location>
        <begin position="439"/>
        <end position="442"/>
    </location>
</feature>
<feature type="region of interest" description="G4" evidence="1">
    <location>
        <begin position="493"/>
        <end position="496"/>
    </location>
</feature>
<feature type="region of interest" description="G5" evidence="1">
    <location>
        <begin position="529"/>
        <end position="531"/>
    </location>
</feature>
<feature type="compositionally biased region" description="Basic and acidic residues" evidence="3">
    <location>
        <begin position="194"/>
        <end position="212"/>
    </location>
</feature>
<feature type="compositionally biased region" description="Low complexity" evidence="3">
    <location>
        <begin position="234"/>
        <end position="248"/>
    </location>
</feature>
<feature type="binding site" evidence="2">
    <location>
        <begin position="393"/>
        <end position="400"/>
    </location>
    <ligand>
        <name>GTP</name>
        <dbReference type="ChEBI" id="CHEBI:37565"/>
    </ligand>
</feature>
<feature type="binding site" evidence="2">
    <location>
        <begin position="439"/>
        <end position="443"/>
    </location>
    <ligand>
        <name>GTP</name>
        <dbReference type="ChEBI" id="CHEBI:37565"/>
    </ligand>
</feature>
<feature type="binding site" evidence="2">
    <location>
        <begin position="493"/>
        <end position="496"/>
    </location>
    <ligand>
        <name>GTP</name>
        <dbReference type="ChEBI" id="CHEBI:37565"/>
    </ligand>
</feature>
<gene>
    <name evidence="2" type="primary">infB</name>
    <name type="ordered locus">Gmet_1586</name>
</gene>
<protein>
    <recommendedName>
        <fullName evidence="2">Translation initiation factor IF-2</fullName>
    </recommendedName>
</protein>
<dbReference type="EMBL" id="CP000148">
    <property type="protein sequence ID" value="ABB31818.1"/>
    <property type="molecule type" value="Genomic_DNA"/>
</dbReference>
<dbReference type="RefSeq" id="WP_011365850.1">
    <property type="nucleotide sequence ID" value="NC_007517.1"/>
</dbReference>
<dbReference type="SMR" id="Q39VA6"/>
<dbReference type="STRING" id="269799.Gmet_1586"/>
<dbReference type="KEGG" id="gme:Gmet_1586"/>
<dbReference type="eggNOG" id="COG0532">
    <property type="taxonomic scope" value="Bacteria"/>
</dbReference>
<dbReference type="HOGENOM" id="CLU_006301_5_1_7"/>
<dbReference type="Proteomes" id="UP000007073">
    <property type="component" value="Chromosome"/>
</dbReference>
<dbReference type="GO" id="GO:0005829">
    <property type="term" value="C:cytosol"/>
    <property type="evidence" value="ECO:0007669"/>
    <property type="project" value="TreeGrafter"/>
</dbReference>
<dbReference type="GO" id="GO:0005525">
    <property type="term" value="F:GTP binding"/>
    <property type="evidence" value="ECO:0007669"/>
    <property type="project" value="UniProtKB-KW"/>
</dbReference>
<dbReference type="GO" id="GO:0003924">
    <property type="term" value="F:GTPase activity"/>
    <property type="evidence" value="ECO:0007669"/>
    <property type="project" value="UniProtKB-UniRule"/>
</dbReference>
<dbReference type="GO" id="GO:0003743">
    <property type="term" value="F:translation initiation factor activity"/>
    <property type="evidence" value="ECO:0007669"/>
    <property type="project" value="UniProtKB-UniRule"/>
</dbReference>
<dbReference type="CDD" id="cd01887">
    <property type="entry name" value="IF2_eIF5B"/>
    <property type="match status" value="1"/>
</dbReference>
<dbReference type="CDD" id="cd03702">
    <property type="entry name" value="IF2_mtIF2_II"/>
    <property type="match status" value="1"/>
</dbReference>
<dbReference type="CDD" id="cd03692">
    <property type="entry name" value="mtIF2_IVc"/>
    <property type="match status" value="1"/>
</dbReference>
<dbReference type="FunFam" id="2.40.30.10:FF:000007">
    <property type="entry name" value="Translation initiation factor IF-2"/>
    <property type="match status" value="1"/>
</dbReference>
<dbReference type="FunFam" id="2.40.30.10:FF:000008">
    <property type="entry name" value="Translation initiation factor IF-2"/>
    <property type="match status" value="1"/>
</dbReference>
<dbReference type="FunFam" id="3.40.50.10050:FF:000001">
    <property type="entry name" value="Translation initiation factor IF-2"/>
    <property type="match status" value="1"/>
</dbReference>
<dbReference type="FunFam" id="3.40.50.300:FF:000019">
    <property type="entry name" value="Translation initiation factor IF-2"/>
    <property type="match status" value="1"/>
</dbReference>
<dbReference type="Gene3D" id="1.10.10.2480">
    <property type="match status" value="1"/>
</dbReference>
<dbReference type="Gene3D" id="3.40.50.300">
    <property type="entry name" value="P-loop containing nucleotide triphosphate hydrolases"/>
    <property type="match status" value="1"/>
</dbReference>
<dbReference type="Gene3D" id="2.40.30.10">
    <property type="entry name" value="Translation factors"/>
    <property type="match status" value="2"/>
</dbReference>
<dbReference type="Gene3D" id="3.40.50.10050">
    <property type="entry name" value="Translation initiation factor IF- 2, domain 3"/>
    <property type="match status" value="1"/>
</dbReference>
<dbReference type="HAMAP" id="MF_00100_B">
    <property type="entry name" value="IF_2_B"/>
    <property type="match status" value="1"/>
</dbReference>
<dbReference type="InterPro" id="IPR053905">
    <property type="entry name" value="EF-G-like_DII"/>
</dbReference>
<dbReference type="InterPro" id="IPR044145">
    <property type="entry name" value="IF2_II"/>
</dbReference>
<dbReference type="InterPro" id="IPR006847">
    <property type="entry name" value="IF2_N"/>
</dbReference>
<dbReference type="InterPro" id="IPR027417">
    <property type="entry name" value="P-loop_NTPase"/>
</dbReference>
<dbReference type="InterPro" id="IPR005225">
    <property type="entry name" value="Small_GTP-bd"/>
</dbReference>
<dbReference type="InterPro" id="IPR000795">
    <property type="entry name" value="T_Tr_GTP-bd_dom"/>
</dbReference>
<dbReference type="InterPro" id="IPR000178">
    <property type="entry name" value="TF_IF2_bacterial-like"/>
</dbReference>
<dbReference type="InterPro" id="IPR015760">
    <property type="entry name" value="TIF_IF2"/>
</dbReference>
<dbReference type="InterPro" id="IPR023115">
    <property type="entry name" value="TIF_IF2_dom3"/>
</dbReference>
<dbReference type="InterPro" id="IPR036925">
    <property type="entry name" value="TIF_IF2_dom3_sf"/>
</dbReference>
<dbReference type="InterPro" id="IPR009000">
    <property type="entry name" value="Transl_B-barrel_sf"/>
</dbReference>
<dbReference type="NCBIfam" id="TIGR00487">
    <property type="entry name" value="IF-2"/>
    <property type="match status" value="1"/>
</dbReference>
<dbReference type="NCBIfam" id="TIGR00231">
    <property type="entry name" value="small_GTP"/>
    <property type="match status" value="1"/>
</dbReference>
<dbReference type="PANTHER" id="PTHR43381:SF5">
    <property type="entry name" value="TR-TYPE G DOMAIN-CONTAINING PROTEIN"/>
    <property type="match status" value="1"/>
</dbReference>
<dbReference type="PANTHER" id="PTHR43381">
    <property type="entry name" value="TRANSLATION INITIATION FACTOR IF-2-RELATED"/>
    <property type="match status" value="1"/>
</dbReference>
<dbReference type="Pfam" id="PF22042">
    <property type="entry name" value="EF-G_D2"/>
    <property type="match status" value="1"/>
</dbReference>
<dbReference type="Pfam" id="PF00009">
    <property type="entry name" value="GTP_EFTU"/>
    <property type="match status" value="1"/>
</dbReference>
<dbReference type="Pfam" id="PF11987">
    <property type="entry name" value="IF-2"/>
    <property type="match status" value="1"/>
</dbReference>
<dbReference type="Pfam" id="PF04760">
    <property type="entry name" value="IF2_N"/>
    <property type="match status" value="2"/>
</dbReference>
<dbReference type="PRINTS" id="PR00449">
    <property type="entry name" value="RASTRNSFRMNG"/>
</dbReference>
<dbReference type="SUPFAM" id="SSF52156">
    <property type="entry name" value="Initiation factor IF2/eIF5b, domain 3"/>
    <property type="match status" value="1"/>
</dbReference>
<dbReference type="SUPFAM" id="SSF52540">
    <property type="entry name" value="P-loop containing nucleoside triphosphate hydrolases"/>
    <property type="match status" value="1"/>
</dbReference>
<dbReference type="SUPFAM" id="SSF50447">
    <property type="entry name" value="Translation proteins"/>
    <property type="match status" value="2"/>
</dbReference>
<dbReference type="PROSITE" id="PS51722">
    <property type="entry name" value="G_TR_2"/>
    <property type="match status" value="1"/>
</dbReference>
<dbReference type="PROSITE" id="PS01176">
    <property type="entry name" value="IF2"/>
    <property type="match status" value="1"/>
</dbReference>
<name>IF2_GEOMG</name>
<proteinExistence type="inferred from homology"/>
<organism>
    <name type="scientific">Geobacter metallireducens (strain ATCC 53774 / DSM 7210 / GS-15)</name>
    <dbReference type="NCBI Taxonomy" id="269799"/>
    <lineage>
        <taxon>Bacteria</taxon>
        <taxon>Pseudomonadati</taxon>
        <taxon>Thermodesulfobacteriota</taxon>
        <taxon>Desulfuromonadia</taxon>
        <taxon>Geobacterales</taxon>
        <taxon>Geobacteraceae</taxon>
        <taxon>Geobacter</taxon>
    </lineage>
</organism>
<reference key="1">
    <citation type="journal article" date="2009" name="BMC Microbiol.">
        <title>The genome sequence of Geobacter metallireducens: features of metabolism, physiology and regulation common and dissimilar to Geobacter sulfurreducens.</title>
        <authorList>
            <person name="Aklujkar M."/>
            <person name="Krushkal J."/>
            <person name="DiBartolo G."/>
            <person name="Lapidus A."/>
            <person name="Land M.L."/>
            <person name="Lovley D.R."/>
        </authorList>
    </citation>
    <scope>NUCLEOTIDE SEQUENCE [LARGE SCALE GENOMIC DNA]</scope>
    <source>
        <strain>ATCC 53774 / DSM 7210 / GS-15</strain>
    </source>
</reference>